<sequence length="638" mass="67180">MSKVIGIDLGTTNSCVAIREGDETRVIENSEGARTTPSMVAFADNGEMLVGQSAKRQAVTNPANTLYAVKRLIGRRYDDPTVTKDKALVPYSIVAGDNGDAWVEAQGKKYAPSQIAAFVLGKMKETAEAYLGEPVSQAVITVPAYFNDAQRQATKDAGRIAGLEVLRIINEPTAAALAYGLQKKNGGTIAVYDLGGGTFDVSILEISDGVIEVKSTNGDTFLGGEDFDARVISYLADEFKREQGIDLRADKLALQRLKEAAEKAKIELSSSKETEINLPFITADASGPKHLVLKLSRAKLESLVDDLIQRTMEPCRAALKDASVSAAEIDEVILVGGMTRMPKVIEAVKQFFGKEPARNVNPDEVVAIGAAVQGAVLKGDVKDVLLLDVTPLSLGIETLGGVFTRLIDRNTTIPTKKSQTFSTAEDNQGAVTIKVFQGEREMAADNKLLGNFDLTGIAPAPRGVPQIEVTFDIDANGIVSVSAKDKATNKEQQIKIQASGGLSESDIEKMVKDAEANATADKAKKELVEARNQAESLAHQVEKSLAEAGDKVPASDKAEAEAAIAAVRTALEGSDAAALKSASETLSQAAMKIGEAVYKAGQAEGAAGAGAPGAGATGPNGEKVVDADFEDVDDKKSA</sequence>
<feature type="chain" id="PRO_1000079229" description="Chaperone protein DnaK">
    <location>
        <begin position="1"/>
        <end position="638"/>
    </location>
</feature>
<feature type="region of interest" description="Disordered" evidence="2">
    <location>
        <begin position="604"/>
        <end position="638"/>
    </location>
</feature>
<feature type="compositionally biased region" description="Gly residues" evidence="2">
    <location>
        <begin position="607"/>
        <end position="618"/>
    </location>
</feature>
<feature type="modified residue" description="Phosphothreonine; by autocatalysis" evidence="1">
    <location>
        <position position="198"/>
    </location>
</feature>
<feature type="sequence conflict" description="In Ref. 2; ACI51733." evidence="3" ref="2">
    <original>V</original>
    <variation>F</variation>
    <location>
        <position position="94"/>
    </location>
</feature>
<protein>
    <recommendedName>
        <fullName evidence="1">Chaperone protein DnaK</fullName>
    </recommendedName>
    <alternativeName>
        <fullName evidence="1">HSP70</fullName>
    </alternativeName>
    <alternativeName>
        <fullName evidence="1">Heat shock 70 kDa protein</fullName>
    </alternativeName>
    <alternativeName>
        <fullName evidence="1">Heat shock protein 70</fullName>
    </alternativeName>
</protein>
<evidence type="ECO:0000255" key="1">
    <source>
        <dbReference type="HAMAP-Rule" id="MF_00332"/>
    </source>
</evidence>
<evidence type="ECO:0000256" key="2">
    <source>
        <dbReference type="SAM" id="MobiDB-lite"/>
    </source>
</evidence>
<evidence type="ECO:0000305" key="3"/>
<reference key="1">
    <citation type="journal article" date="2009" name="BMC Genomics">
        <title>Complete genome sequence of the sugarcane nitrogen-fixing endophyte Gluconacetobacter diazotrophicus Pal5.</title>
        <authorList>
            <person name="Bertalan M."/>
            <person name="Albano R."/>
            <person name="de Padua V."/>
            <person name="Rouws L."/>
            <person name="Rojas C."/>
            <person name="Hemerly A."/>
            <person name="Teixeira K."/>
            <person name="Schwab S."/>
            <person name="Araujo J."/>
            <person name="Oliveira A."/>
            <person name="Franca L."/>
            <person name="Magalhaes V."/>
            <person name="Alqueres S."/>
            <person name="Cardoso A."/>
            <person name="Almeida W."/>
            <person name="Loureiro M.M."/>
            <person name="Nogueira E."/>
            <person name="Cidade D."/>
            <person name="Oliveira D."/>
            <person name="Simao T."/>
            <person name="Macedo J."/>
            <person name="Valadao A."/>
            <person name="Dreschsel M."/>
            <person name="Freitas F."/>
            <person name="Vidal M."/>
            <person name="Guedes H."/>
            <person name="Rodrigues E."/>
            <person name="Meneses C."/>
            <person name="Brioso P."/>
            <person name="Pozzer L."/>
            <person name="Figueiredo D."/>
            <person name="Montano H."/>
            <person name="Junior J."/>
            <person name="de Souza Filho G."/>
            <person name="Martin Quintana Flores V."/>
            <person name="Ferreira B."/>
            <person name="Branco A."/>
            <person name="Gonzalez P."/>
            <person name="Guillobel H."/>
            <person name="Lemos M."/>
            <person name="Seibel L."/>
            <person name="Macedo J."/>
            <person name="Alves-Ferreira M."/>
            <person name="Sachetto-Martins G."/>
            <person name="Coelho A."/>
            <person name="Santos E."/>
            <person name="Amaral G."/>
            <person name="Neves A."/>
            <person name="Pacheco A.B."/>
            <person name="Carvalho D."/>
            <person name="Lery L."/>
            <person name="Bisch P."/>
            <person name="Rossle S.C."/>
            <person name="Urmenyi T."/>
            <person name="Rael Pereira A."/>
            <person name="Silva R."/>
            <person name="Rondinelli E."/>
            <person name="von Kruger W."/>
            <person name="Martins O."/>
            <person name="Baldani J.I."/>
            <person name="Ferreira P.C."/>
        </authorList>
    </citation>
    <scope>NUCLEOTIDE SEQUENCE [LARGE SCALE GENOMIC DNA]</scope>
    <source>
        <strain>ATCC 49037 / DSM 5601 / CCUG 37298 / CIP 103539 / LMG 7603 / PAl5</strain>
    </source>
</reference>
<reference key="2">
    <citation type="journal article" date="2010" name="Stand. Genomic Sci.">
        <title>Two genome sequences of the same bacterial strain, Gluconacetobacter diazotrophicus PAl 5, suggest a new standard in genome sequence submission.</title>
        <authorList>
            <person name="Giongo A."/>
            <person name="Tyler H.L."/>
            <person name="Zipperer U.N."/>
            <person name="Triplett E.W."/>
        </authorList>
    </citation>
    <scope>NUCLEOTIDE SEQUENCE [LARGE SCALE GENOMIC DNA]</scope>
    <source>
        <strain>ATCC 49037 / DSM 5601 / CCUG 37298 / CIP 103539 / LMG 7603 / PAl5</strain>
    </source>
</reference>
<name>DNAK_GLUDA</name>
<proteinExistence type="inferred from homology"/>
<accession>A9HEA3</accession>
<accession>B5ZCS5</accession>
<keyword id="KW-0067">ATP-binding</keyword>
<keyword id="KW-0143">Chaperone</keyword>
<keyword id="KW-0547">Nucleotide-binding</keyword>
<keyword id="KW-0597">Phosphoprotein</keyword>
<keyword id="KW-1185">Reference proteome</keyword>
<keyword id="KW-0346">Stress response</keyword>
<dbReference type="EMBL" id="AM889285">
    <property type="protein sequence ID" value="CAP55205.1"/>
    <property type="molecule type" value="Genomic_DNA"/>
</dbReference>
<dbReference type="EMBL" id="CP001189">
    <property type="protein sequence ID" value="ACI51733.1"/>
    <property type="molecule type" value="Genomic_DNA"/>
</dbReference>
<dbReference type="RefSeq" id="WP_012224433.1">
    <property type="nucleotide sequence ID" value="NC_010125.1"/>
</dbReference>
<dbReference type="RefSeq" id="WP_012554063.1">
    <property type="nucleotide sequence ID" value="NC_011365.1"/>
</dbReference>
<dbReference type="SMR" id="A9HEA3"/>
<dbReference type="STRING" id="272568.GDI1262"/>
<dbReference type="KEGG" id="gdi:GDI1262"/>
<dbReference type="KEGG" id="gdj:Gdia_1973"/>
<dbReference type="eggNOG" id="COG0443">
    <property type="taxonomic scope" value="Bacteria"/>
</dbReference>
<dbReference type="HOGENOM" id="CLU_005965_2_1_5"/>
<dbReference type="OrthoDB" id="9766019at2"/>
<dbReference type="Proteomes" id="UP000001176">
    <property type="component" value="Chromosome"/>
</dbReference>
<dbReference type="GO" id="GO:0005524">
    <property type="term" value="F:ATP binding"/>
    <property type="evidence" value="ECO:0007669"/>
    <property type="project" value="UniProtKB-UniRule"/>
</dbReference>
<dbReference type="GO" id="GO:0140662">
    <property type="term" value="F:ATP-dependent protein folding chaperone"/>
    <property type="evidence" value="ECO:0007669"/>
    <property type="project" value="InterPro"/>
</dbReference>
<dbReference type="GO" id="GO:0051082">
    <property type="term" value="F:unfolded protein binding"/>
    <property type="evidence" value="ECO:0007669"/>
    <property type="project" value="InterPro"/>
</dbReference>
<dbReference type="CDD" id="cd11733">
    <property type="entry name" value="ASKHA_NBD_HSP70_HSPA9"/>
    <property type="match status" value="1"/>
</dbReference>
<dbReference type="FunFam" id="2.60.34.10:FF:000014">
    <property type="entry name" value="Chaperone protein DnaK HSP70"/>
    <property type="match status" value="1"/>
</dbReference>
<dbReference type="FunFam" id="1.20.1270.10:FF:000001">
    <property type="entry name" value="Molecular chaperone DnaK"/>
    <property type="match status" value="1"/>
</dbReference>
<dbReference type="FunFam" id="3.30.420.40:FF:000004">
    <property type="entry name" value="Molecular chaperone DnaK"/>
    <property type="match status" value="1"/>
</dbReference>
<dbReference type="FunFam" id="3.90.640.10:FF:000003">
    <property type="entry name" value="Molecular chaperone DnaK"/>
    <property type="match status" value="1"/>
</dbReference>
<dbReference type="Gene3D" id="1.20.1270.10">
    <property type="match status" value="1"/>
</dbReference>
<dbReference type="Gene3D" id="3.30.420.40">
    <property type="match status" value="2"/>
</dbReference>
<dbReference type="Gene3D" id="3.90.640.10">
    <property type="entry name" value="Actin, Chain A, domain 4"/>
    <property type="match status" value="1"/>
</dbReference>
<dbReference type="Gene3D" id="2.60.34.10">
    <property type="entry name" value="Substrate Binding Domain Of DNAk, Chain A, domain 1"/>
    <property type="match status" value="1"/>
</dbReference>
<dbReference type="HAMAP" id="MF_00332">
    <property type="entry name" value="DnaK"/>
    <property type="match status" value="1"/>
</dbReference>
<dbReference type="InterPro" id="IPR043129">
    <property type="entry name" value="ATPase_NBD"/>
</dbReference>
<dbReference type="InterPro" id="IPR012725">
    <property type="entry name" value="Chaperone_DnaK"/>
</dbReference>
<dbReference type="InterPro" id="IPR018181">
    <property type="entry name" value="Heat_shock_70_CS"/>
</dbReference>
<dbReference type="InterPro" id="IPR029048">
    <property type="entry name" value="HSP70_C_sf"/>
</dbReference>
<dbReference type="InterPro" id="IPR029047">
    <property type="entry name" value="HSP70_peptide-bd_sf"/>
</dbReference>
<dbReference type="InterPro" id="IPR013126">
    <property type="entry name" value="Hsp_70_fam"/>
</dbReference>
<dbReference type="NCBIfam" id="NF001413">
    <property type="entry name" value="PRK00290.1"/>
    <property type="match status" value="1"/>
</dbReference>
<dbReference type="NCBIfam" id="NF003520">
    <property type="entry name" value="PRK05183.1"/>
    <property type="match status" value="1"/>
</dbReference>
<dbReference type="NCBIfam" id="TIGR02350">
    <property type="entry name" value="prok_dnaK"/>
    <property type="match status" value="1"/>
</dbReference>
<dbReference type="PANTHER" id="PTHR19375">
    <property type="entry name" value="HEAT SHOCK PROTEIN 70KDA"/>
    <property type="match status" value="1"/>
</dbReference>
<dbReference type="Pfam" id="PF00012">
    <property type="entry name" value="HSP70"/>
    <property type="match status" value="1"/>
</dbReference>
<dbReference type="PRINTS" id="PR00301">
    <property type="entry name" value="HEATSHOCK70"/>
</dbReference>
<dbReference type="SUPFAM" id="SSF53067">
    <property type="entry name" value="Actin-like ATPase domain"/>
    <property type="match status" value="2"/>
</dbReference>
<dbReference type="SUPFAM" id="SSF100934">
    <property type="entry name" value="Heat shock protein 70kD (HSP70), C-terminal subdomain"/>
    <property type="match status" value="1"/>
</dbReference>
<dbReference type="SUPFAM" id="SSF100920">
    <property type="entry name" value="Heat shock protein 70kD (HSP70), peptide-binding domain"/>
    <property type="match status" value="1"/>
</dbReference>
<dbReference type="PROSITE" id="PS00297">
    <property type="entry name" value="HSP70_1"/>
    <property type="match status" value="1"/>
</dbReference>
<dbReference type="PROSITE" id="PS00329">
    <property type="entry name" value="HSP70_2"/>
    <property type="match status" value="1"/>
</dbReference>
<dbReference type="PROSITE" id="PS01036">
    <property type="entry name" value="HSP70_3"/>
    <property type="match status" value="1"/>
</dbReference>
<gene>
    <name evidence="1" type="primary">dnaK</name>
    <name type="ordered locus">GDI1262</name>
    <name type="ordered locus">Gdia_1973</name>
</gene>
<organism>
    <name type="scientific">Gluconacetobacter diazotrophicus (strain ATCC 49037 / DSM 5601 / CCUG 37298 / CIP 103539 / LMG 7603 / PAl5)</name>
    <dbReference type="NCBI Taxonomy" id="272568"/>
    <lineage>
        <taxon>Bacteria</taxon>
        <taxon>Pseudomonadati</taxon>
        <taxon>Pseudomonadota</taxon>
        <taxon>Alphaproteobacteria</taxon>
        <taxon>Acetobacterales</taxon>
        <taxon>Acetobacteraceae</taxon>
        <taxon>Gluconacetobacter</taxon>
    </lineage>
</organism>
<comment type="function">
    <text evidence="1">Acts as a chaperone.</text>
</comment>
<comment type="induction">
    <text evidence="1">By stress conditions e.g. heat shock.</text>
</comment>
<comment type="similarity">
    <text evidence="1">Belongs to the heat shock protein 70 family.</text>
</comment>